<geneLocation type="chloroplast"/>
<proteinExistence type="inferred from homology"/>
<comment type="function">
    <text evidence="1">Contributes to K(+)/H(+) antiport activity by supporting proton efflux to control proton extrusion and homeostasis in chloroplasts in a light-dependent manner to modulate photosynthesis. Prevents excessive induction of non-photochemical quenching (NPQ) under continuous-light conditions. Indirectly promotes efficient inorganic carbon uptake into chloroplasts.</text>
</comment>
<comment type="catalytic activity">
    <reaction evidence="1">
        <text>K(+)(in) + H(+)(out) = K(+)(out) + H(+)(in)</text>
        <dbReference type="Rhea" id="RHEA:29467"/>
        <dbReference type="ChEBI" id="CHEBI:15378"/>
        <dbReference type="ChEBI" id="CHEBI:29103"/>
    </reaction>
</comment>
<comment type="subcellular location">
    <subcellularLocation>
        <location evidence="1">Plastid</location>
        <location evidence="1">Chloroplast inner membrane</location>
        <topology evidence="1">Multi-pass membrane protein</topology>
    </subcellularLocation>
</comment>
<comment type="similarity">
    <text evidence="1 2">Belongs to the CemA family.</text>
</comment>
<evidence type="ECO:0000255" key="1">
    <source>
        <dbReference type="HAMAP-Rule" id="MF_01308"/>
    </source>
</evidence>
<evidence type="ECO:0000305" key="2"/>
<sequence length="230" mass="27091">MKKKKALPSLLYLVFIVLLPWGVSSSFNKCLELWIKNWWNTRQSETLLTDIQEKRILERFIELEELSLLDEMIKGKLKTHVQKPPTGIHKEIIQWVKINNEDHLHTILHFSTNIICLAILSGSFFLGKEELVILNSWVQEFFYNLNDSIKAFFILLVTDFFVGFHSTRGWELVIRWVYNDFGWAPNELIFTIFVCSFPVILDTCLKFWVFFCLNRLSPSLVVIYHSISEA</sequence>
<gene>
    <name evidence="1" type="primary">cemA</name>
    <name type="synonym">ycf10</name>
</gene>
<name>CEMA_WHEAT</name>
<keyword id="KW-0050">Antiport</keyword>
<keyword id="KW-0150">Chloroplast</keyword>
<keyword id="KW-0375">Hydrogen ion transport</keyword>
<keyword id="KW-0406">Ion transport</keyword>
<keyword id="KW-0472">Membrane</keyword>
<keyword id="KW-0934">Plastid</keyword>
<keyword id="KW-1001">Plastid inner membrane</keyword>
<keyword id="KW-0630">Potassium</keyword>
<keyword id="KW-0633">Potassium transport</keyword>
<keyword id="KW-1185">Reference proteome</keyword>
<keyword id="KW-0812">Transmembrane</keyword>
<keyword id="KW-1133">Transmembrane helix</keyword>
<keyword id="KW-0813">Transport</keyword>
<reference key="1">
    <citation type="journal article" date="2000" name="Plant Mol. Biol. Rep.">
        <title>Chinese spring wheat (Triticum aestivum L.) chloroplast genome: complete sequence and contig clones.</title>
        <authorList>
            <person name="Ogihara Y."/>
            <person name="Isono K."/>
            <person name="Kojima T."/>
            <person name="Endo A."/>
            <person name="Hanaoka M."/>
            <person name="Shiina T."/>
            <person name="Terachi T."/>
            <person name="Utsugi S."/>
            <person name="Murata M."/>
            <person name="Mori N."/>
            <person name="Takumi S."/>
            <person name="Ikeo K."/>
            <person name="Gojobori T."/>
            <person name="Murai R."/>
            <person name="Murai K."/>
            <person name="Matsuoka Y."/>
            <person name="Ohnishi Y."/>
            <person name="Tajiri H."/>
            <person name="Tsunewaki K."/>
        </authorList>
    </citation>
    <scope>NUCLEOTIDE SEQUENCE [LARGE SCALE GENOMIC DNA]</scope>
    <source>
        <strain>cv. Chinese Spring</strain>
    </source>
</reference>
<reference key="2">
    <citation type="journal article" date="1991" name="Genetics">
        <title>Molecular analysis of the hot spot region related to length mutations in wheat chloroplast DNAs. I. Nucleotide divergence of genes and intergenic spacer regions located in the hot spot region.</title>
        <authorList>
            <person name="Ogihara Y."/>
            <person name="Terachi T."/>
            <person name="Sasakuma T."/>
        </authorList>
    </citation>
    <scope>NUCLEOTIDE SEQUENCE [GENOMIC DNA] OF 1-151</scope>
    <source>
        <strain>cv. Chinese Spring</strain>
        <tissue>Seedling</tissue>
    </source>
</reference>
<organism>
    <name type="scientific">Triticum aestivum</name>
    <name type="common">Wheat</name>
    <dbReference type="NCBI Taxonomy" id="4565"/>
    <lineage>
        <taxon>Eukaryota</taxon>
        <taxon>Viridiplantae</taxon>
        <taxon>Streptophyta</taxon>
        <taxon>Embryophyta</taxon>
        <taxon>Tracheophyta</taxon>
        <taxon>Spermatophyta</taxon>
        <taxon>Magnoliopsida</taxon>
        <taxon>Liliopsida</taxon>
        <taxon>Poales</taxon>
        <taxon>Poaceae</taxon>
        <taxon>BOP clade</taxon>
        <taxon>Pooideae</taxon>
        <taxon>Triticodae</taxon>
        <taxon>Triticeae</taxon>
        <taxon>Triticinae</taxon>
        <taxon>Triticum</taxon>
    </lineage>
</organism>
<dbReference type="EMBL" id="AB042240">
    <property type="protein sequence ID" value="BAB47045.1"/>
    <property type="molecule type" value="Genomic_DNA"/>
</dbReference>
<dbReference type="EMBL" id="X62117">
    <property type="protein sequence ID" value="CAA44031.1"/>
    <property type="molecule type" value="Genomic_DNA"/>
</dbReference>
<dbReference type="PIR" id="S17326">
    <property type="entry name" value="S17326"/>
</dbReference>
<dbReference type="RefSeq" id="NP_114270.1">
    <property type="nucleotide sequence ID" value="NC_002762.1"/>
</dbReference>
<dbReference type="STRING" id="4565.P69373"/>
<dbReference type="PaxDb" id="4565-EPlTAEP00000010033"/>
<dbReference type="EnsemblPlants" id="TraesKAR2D01G0025660.1">
    <property type="protein sequence ID" value="cds.TraesKAR2D01G0025660.1"/>
    <property type="gene ID" value="TraesKAR2D01G0025660"/>
</dbReference>
<dbReference type="EnsemblPlants" id="TraesKAR6B01G0219460.1">
    <property type="protein sequence ID" value="cds.TraesKAR6B01G0219460.1"/>
    <property type="gene ID" value="TraesKAR6B01G0219460"/>
</dbReference>
<dbReference type="EnsemblPlants" id="TraesKAR6B01G0220210.1">
    <property type="protein sequence ID" value="cds.TraesKAR6B01G0220210.1"/>
    <property type="gene ID" value="TraesKAR6B01G0220210"/>
</dbReference>
<dbReference type="EnsemblPlants" id="TraesKAR7A01G0472580.1">
    <property type="protein sequence ID" value="cds.TraesKAR7A01G0472580.1"/>
    <property type="gene ID" value="TraesKAR7A01G0472580"/>
</dbReference>
<dbReference type="EnsemblPlants" id="TraesKARUn01G0026340.1">
    <property type="protein sequence ID" value="cds.TraesKARUn01G0026340.1"/>
    <property type="gene ID" value="TraesKARUn01G0026340"/>
</dbReference>
<dbReference type="EnsemblPlants" id="TraesKARUn01G0028480.1">
    <property type="protein sequence ID" value="cds.TraesKARUn01G0028480.1"/>
    <property type="gene ID" value="TraesKARUn01G0028480"/>
</dbReference>
<dbReference type="EnsemblPlants" id="TraesKARUn01G0028820.1">
    <property type="protein sequence ID" value="cds.TraesKARUn01G0028820.1"/>
    <property type="gene ID" value="TraesKARUn01G0028820"/>
</dbReference>
<dbReference type="EnsemblPlants" id="TraesKARUn01G0031390.1">
    <property type="protein sequence ID" value="cds.TraesKARUn01G0031390.1"/>
    <property type="gene ID" value="TraesKARUn01G0031390"/>
</dbReference>
<dbReference type="EnsemblPlants" id="TraesKARUn01G0031710.1">
    <property type="protein sequence ID" value="cds.TraesKARUn01G0031710.1"/>
    <property type="gene ID" value="TraesKARUn01G0031710"/>
</dbReference>
<dbReference type="EnsemblPlants" id="TraesKARUn01G0031780.1">
    <property type="protein sequence ID" value="cds.TraesKARUn01G0031780.1"/>
    <property type="gene ID" value="TraesKARUn01G0031780"/>
</dbReference>
<dbReference type="EnsemblPlants" id="TraesKARUn01G0032660.1">
    <property type="protein sequence ID" value="cds.TraesKARUn01G0032660.1"/>
    <property type="gene ID" value="TraesKARUn01G0032660"/>
</dbReference>
<dbReference type="EnsemblPlants" id="TraesKARUn01G0032820.1">
    <property type="protein sequence ID" value="cds.TraesKARUn01G0032820.1"/>
    <property type="gene ID" value="TraesKARUn01G0032820"/>
</dbReference>
<dbReference type="EnsemblPlants" id="TraesKARUn01G0033470.1">
    <property type="protein sequence ID" value="cds.TraesKARUn01G0033470.1"/>
    <property type="gene ID" value="TraesKARUn01G0033470"/>
</dbReference>
<dbReference type="EnsemblPlants" id="TraesKARUn01G0034670.1">
    <property type="protein sequence ID" value="cds.TraesKARUn01G0034670.1"/>
    <property type="gene ID" value="TraesKARUn01G0034670"/>
</dbReference>
<dbReference type="EnsemblPlants" id="TraesKARUn01G0060290.1">
    <property type="protein sequence ID" value="cds.TraesKARUn01G0060290.1"/>
    <property type="gene ID" value="TraesKARUn01G0060290"/>
</dbReference>
<dbReference type="EnsemblPlants" id="TraesKARUn01G0068370.1">
    <property type="protein sequence ID" value="cds.TraesKARUn01G0068370.1"/>
    <property type="gene ID" value="TraesKARUn01G0068370"/>
</dbReference>
<dbReference type="EnsemblPlants" id="TraesKARUn01G0074880.1">
    <property type="protein sequence ID" value="cds.TraesKARUn01G0074880.1"/>
    <property type="gene ID" value="TraesKARUn01G0074880"/>
</dbReference>
<dbReference type="EnsemblPlants" id="TraesKARUn01G0074940.1">
    <property type="protein sequence ID" value="cds.TraesKARUn01G0074940.1"/>
    <property type="gene ID" value="TraesKARUn01G0074940"/>
</dbReference>
<dbReference type="EnsemblPlants" id="TraesKARUn01G0078120.1">
    <property type="protein sequence ID" value="cds.TraesKARUn01G0078120.1"/>
    <property type="gene ID" value="TraesKARUn01G0078120"/>
</dbReference>
<dbReference type="EnsemblPlants" id="TraesKARUn01G0080360.1">
    <property type="protein sequence ID" value="cds.TraesKARUn01G0080360.1"/>
    <property type="gene ID" value="TraesKARUn01G0080360"/>
</dbReference>
<dbReference type="EnsemblPlants" id="TraesKARUn01G0085110.1">
    <property type="protein sequence ID" value="cds.TraesKARUn01G0085110.1"/>
    <property type="gene ID" value="TraesKARUn01G0085110"/>
</dbReference>
<dbReference type="EnsemblPlants" id="TraesKARUn01G0086200.1">
    <property type="protein sequence ID" value="cds.TraesKARUn01G0086200.1"/>
    <property type="gene ID" value="TraesKARUn01G0086200"/>
</dbReference>
<dbReference type="EnsemblPlants" id="TraesKARUn01G0089230.1">
    <property type="protein sequence ID" value="cds.TraesKARUn01G0089230.1"/>
    <property type="gene ID" value="TraesKARUn01G0089230"/>
</dbReference>
<dbReference type="EnsemblPlants" id="TraesKARUn01G0091100.1">
    <property type="protein sequence ID" value="cds.TraesKARUn01G0091100.1"/>
    <property type="gene ID" value="TraesKARUn01G0091100"/>
</dbReference>
<dbReference type="EnsemblPlants" id="TraesKARUn01G0093490.1">
    <property type="protein sequence ID" value="cds.TraesKARUn01G0093490.1"/>
    <property type="gene ID" value="TraesKARUn01G0093490"/>
</dbReference>
<dbReference type="EnsemblPlants" id="TraesKARUn01G0095780.1">
    <property type="protein sequence ID" value="cds.TraesKARUn01G0095780.1"/>
    <property type="gene ID" value="TraesKARUn01G0095780"/>
</dbReference>
<dbReference type="EnsemblPlants" id="TraesKARUn01G0095920.1">
    <property type="protein sequence ID" value="cds.TraesKARUn01G0095920.1"/>
    <property type="gene ID" value="TraesKARUn01G0095920"/>
</dbReference>
<dbReference type="EnsemblPlants" id="TraesKARUn01G0097180.1">
    <property type="protein sequence ID" value="cds.TraesKARUn01G0097180.1"/>
    <property type="gene ID" value="TraesKARUn01G0097180"/>
</dbReference>
<dbReference type="EnsemblPlants" id="TraesKARUn01G0097770.1">
    <property type="protein sequence ID" value="cds.TraesKARUn01G0097770.1"/>
    <property type="gene ID" value="TraesKARUn01G0097770"/>
</dbReference>
<dbReference type="EnsemblPlants" id="TraesKARUn01G0098740.1">
    <property type="protein sequence ID" value="cds.TraesKARUn01G0098740.1"/>
    <property type="gene ID" value="TraesKARUn01G0098740"/>
</dbReference>
<dbReference type="EnsemblPlants" id="TraesKARUn01G0101740.1">
    <property type="protein sequence ID" value="cds.TraesKARUn01G0101740.1"/>
    <property type="gene ID" value="TraesKARUn01G0101740"/>
</dbReference>
<dbReference type="EnsemblPlants" id="TraesKARUn01G0101980.1">
    <property type="protein sequence ID" value="cds.TraesKARUn01G0101980.1"/>
    <property type="gene ID" value="TraesKARUn01G0101980"/>
</dbReference>
<dbReference type="EnsemblPlants" id="TraesKARUn01G0103880.1">
    <property type="protein sequence ID" value="cds.TraesKARUn01G0103880.1"/>
    <property type="gene ID" value="TraesKARUn01G0103880"/>
</dbReference>
<dbReference type="EnsemblPlants" id="TraesKARUn01G0104440.1">
    <property type="protein sequence ID" value="cds.TraesKARUn01G0104440.1"/>
    <property type="gene ID" value="TraesKARUn01G0104440"/>
</dbReference>
<dbReference type="EnsemblPlants" id="TraesKARUn01G0105700.1">
    <property type="protein sequence ID" value="cds.TraesKARUn01G0105700.1"/>
    <property type="gene ID" value="TraesKARUn01G0105700"/>
</dbReference>
<dbReference type="EnsemblPlants" id="TraesKARUn01G0106230.1">
    <property type="protein sequence ID" value="cds.TraesKARUn01G0106230.1"/>
    <property type="gene ID" value="TraesKARUn01G0106230"/>
</dbReference>
<dbReference type="EnsemblPlants" id="TraesKARUn01G0106820.1">
    <property type="protein sequence ID" value="cds.TraesKARUn01G0106820.1"/>
    <property type="gene ID" value="TraesKARUn01G0106820"/>
</dbReference>
<dbReference type="EnsemblPlants" id="TraesKARUn01G0106940.1">
    <property type="protein sequence ID" value="cds.TraesKARUn01G0106940.1"/>
    <property type="gene ID" value="TraesKARUn01G0106940"/>
</dbReference>
<dbReference type="EnsemblPlants" id="TraesKARUn01G0106990.1">
    <property type="protein sequence ID" value="cds.TraesKARUn01G0106990.1"/>
    <property type="gene ID" value="TraesKARUn01G0106990"/>
</dbReference>
<dbReference type="EnsemblPlants" id="TraesKARUn01G0107180.1">
    <property type="protein sequence ID" value="cds.TraesKARUn01G0107180.1"/>
    <property type="gene ID" value="TraesKARUn01G0107180"/>
</dbReference>
<dbReference type="EnsemblPlants" id="TraesKARUn01G0107290.1">
    <property type="protein sequence ID" value="cds.TraesKARUn01G0107290.1"/>
    <property type="gene ID" value="TraesKARUn01G0107290"/>
</dbReference>
<dbReference type="EnsemblPlants" id="TraesKARUn01G0107790.1">
    <property type="protein sequence ID" value="cds.TraesKARUn01G0107790.1"/>
    <property type="gene ID" value="TraesKARUn01G0107790"/>
</dbReference>
<dbReference type="EnsemblPlants" id="TraesKARUn01G0109440.1">
    <property type="protein sequence ID" value="cds.TraesKARUn01G0109440.1"/>
    <property type="gene ID" value="TraesKARUn01G0109440"/>
</dbReference>
<dbReference type="EnsemblPlants" id="TraesKARUn01G0110060.1">
    <property type="protein sequence ID" value="cds.TraesKARUn01G0110060.1"/>
    <property type="gene ID" value="TraesKARUn01G0110060"/>
</dbReference>
<dbReference type="EnsemblPlants" id="TraesKARUn01G0113490.1">
    <property type="protein sequence ID" value="cds.TraesKARUn01G0113490.1"/>
    <property type="gene ID" value="TraesKARUn01G0113490"/>
</dbReference>
<dbReference type="EnsemblPlants" id="TraesKARUn01G0115050.1">
    <property type="protein sequence ID" value="cds.TraesKARUn01G0115050.1"/>
    <property type="gene ID" value="TraesKARUn01G0115050"/>
</dbReference>
<dbReference type="EnsemblPlants" id="TraesKARUn01G0115390.1">
    <property type="protein sequence ID" value="cds.TraesKARUn01G0115390.1"/>
    <property type="gene ID" value="TraesKARUn01G0115390"/>
</dbReference>
<dbReference type="EnsemblPlants" id="TraesKARUn01G0116070.1">
    <property type="protein sequence ID" value="cds.TraesKARUn01G0116070.1"/>
    <property type="gene ID" value="TraesKARUn01G0116070"/>
</dbReference>
<dbReference type="EnsemblPlants" id="TraesKARUn01G0119460.1">
    <property type="protein sequence ID" value="cds.TraesKARUn01G0119460.1"/>
    <property type="gene ID" value="TraesKARUn01G0119460"/>
</dbReference>
<dbReference type="EnsemblPlants" id="TraesKARUn01G0121970.1">
    <property type="protein sequence ID" value="cds.TraesKARUn01G0121970.1"/>
    <property type="gene ID" value="TraesKARUn01G0121970"/>
</dbReference>
<dbReference type="EnsemblPlants" id="TraesKARUn01G0122310.1">
    <property type="protein sequence ID" value="cds.TraesKARUn01G0122310.1"/>
    <property type="gene ID" value="TraesKARUn01G0122310"/>
</dbReference>
<dbReference type="EnsemblPlants" id="TraesKARUn01G0123420.1">
    <property type="protein sequence ID" value="cds.TraesKARUn01G0123420.1"/>
    <property type="gene ID" value="TraesKARUn01G0123420"/>
</dbReference>
<dbReference type="EnsemblPlants" id="TraesKARUn01G0123590.1">
    <property type="protein sequence ID" value="cds.TraesKARUn01G0123590.1"/>
    <property type="gene ID" value="TraesKARUn01G0123590"/>
</dbReference>
<dbReference type="EnsemblPlants" id="TraesKARUn01G0125840.1">
    <property type="protein sequence ID" value="cds.TraesKARUn01G0125840.1"/>
    <property type="gene ID" value="TraesKARUn01G0125840"/>
</dbReference>
<dbReference type="EnsemblPlants" id="TraesKARUn01G0127950.1">
    <property type="protein sequence ID" value="cds.TraesKARUn01G0127950.1"/>
    <property type="gene ID" value="TraesKARUn01G0127950"/>
</dbReference>
<dbReference type="EnsemblPlants" id="TraesKARUn01G0128050.1">
    <property type="protein sequence ID" value="cds.TraesKARUn01G0128050.1"/>
    <property type="gene ID" value="TraesKARUn01G0128050"/>
</dbReference>
<dbReference type="EnsemblPlants" id="TraesKARUn01G0128250.1">
    <property type="protein sequence ID" value="cds.TraesKARUn01G0128250.1"/>
    <property type="gene ID" value="TraesKARUn01G0128250"/>
</dbReference>
<dbReference type="EnsemblPlants" id="TraesKARUn01G0129170.1">
    <property type="protein sequence ID" value="cds.TraesKARUn01G0129170.1"/>
    <property type="gene ID" value="TraesKARUn01G0129170"/>
</dbReference>
<dbReference type="EnsemblPlants" id="TraesKARUn01G0130020.1">
    <property type="protein sequence ID" value="cds.TraesKARUn01G0130020.1"/>
    <property type="gene ID" value="TraesKARUn01G0130020"/>
</dbReference>
<dbReference type="EnsemblPlants" id="TraesKARUn01G0130210.1">
    <property type="protein sequence ID" value="cds.TraesKARUn01G0130210.1"/>
    <property type="gene ID" value="TraesKARUn01G0130210"/>
</dbReference>
<dbReference type="EnsemblPlants" id="TraesKARUn01G0131090.1">
    <property type="protein sequence ID" value="cds.TraesKARUn01G0131090.1"/>
    <property type="gene ID" value="TraesKARUn01G0131090"/>
</dbReference>
<dbReference type="EnsemblPlants" id="TraesKARUn01G0132020.1">
    <property type="protein sequence ID" value="cds.TraesKARUn01G0132020.1"/>
    <property type="gene ID" value="TraesKARUn01G0132020"/>
</dbReference>
<dbReference type="EnsemblPlants" id="TraesKARUn01G0133720.1">
    <property type="protein sequence ID" value="cds.TraesKARUn01G0133720.1"/>
    <property type="gene ID" value="TraesKARUn01G0133720"/>
</dbReference>
<dbReference type="EnsemblPlants" id="TraesKARUn01G0133920.1">
    <property type="protein sequence ID" value="cds.TraesKARUn01G0133920.1"/>
    <property type="gene ID" value="TraesKARUn01G0133920"/>
</dbReference>
<dbReference type="EnsemblPlants" id="TraesKARUn01G0134630.1">
    <property type="protein sequence ID" value="cds.TraesKARUn01G0134630.1"/>
    <property type="gene ID" value="TraesKARUn01G0134630"/>
</dbReference>
<dbReference type="EnsemblPlants" id="TraesKARUn01G0134970.1">
    <property type="protein sequence ID" value="cds.TraesKARUn01G0134970.1"/>
    <property type="gene ID" value="TraesKARUn01G0134970"/>
</dbReference>
<dbReference type="EnsemblPlants" id="TraesKARUn01G0135370.1">
    <property type="protein sequence ID" value="cds.TraesKARUn01G0135370.1"/>
    <property type="gene ID" value="TraesKARUn01G0135370"/>
</dbReference>
<dbReference type="EnsemblPlants" id="TraesKARUn01G0136250.1">
    <property type="protein sequence ID" value="cds.TraesKARUn01G0136250.1"/>
    <property type="gene ID" value="TraesKARUn01G0136250"/>
</dbReference>
<dbReference type="EnsemblPlants" id="TraesKARUn01G0136340.1">
    <property type="protein sequence ID" value="cds.TraesKARUn01G0136340.1"/>
    <property type="gene ID" value="TraesKARUn01G0136340"/>
</dbReference>
<dbReference type="EnsemblPlants" id="TraesKARUn01G0137220.1">
    <property type="protein sequence ID" value="cds.TraesKARUn01G0137220.1"/>
    <property type="gene ID" value="TraesKARUn01G0137220"/>
</dbReference>
<dbReference type="EnsemblPlants" id="TraesKARUn01G0137620.1">
    <property type="protein sequence ID" value="cds.TraesKARUn01G0137620.1"/>
    <property type="gene ID" value="TraesKARUn01G0137620"/>
</dbReference>
<dbReference type="EnsemblPlants" id="TraesKARUn01G0138610.1">
    <property type="protein sequence ID" value="cds.TraesKARUn01G0138610.1"/>
    <property type="gene ID" value="TraesKARUn01G0138610"/>
</dbReference>
<dbReference type="EnsemblPlants" id="TraesKARUn01G0140320.1">
    <property type="protein sequence ID" value="cds.TraesKARUn01G0140320.1"/>
    <property type="gene ID" value="TraesKARUn01G0140320"/>
</dbReference>
<dbReference type="EnsemblPlants" id="TraesKARUn01G0141310.1">
    <property type="protein sequence ID" value="cds.TraesKARUn01G0141310.1"/>
    <property type="gene ID" value="TraesKARUn01G0141310"/>
</dbReference>
<dbReference type="EnsemblPlants" id="TraesKARUn01G0145720.1">
    <property type="protein sequence ID" value="cds.TraesKARUn01G0145720.1"/>
    <property type="gene ID" value="TraesKARUn01G0145720"/>
</dbReference>
<dbReference type="EnsemblPlants" id="TraesKARUn01G0146210.1">
    <property type="protein sequence ID" value="cds.TraesKARUn01G0146210.1"/>
    <property type="gene ID" value="TraesKARUn01G0146210"/>
</dbReference>
<dbReference type="EnsemblPlants" id="TraesKARUn01G0146420.1">
    <property type="protein sequence ID" value="cds.TraesKARUn01G0146420.1"/>
    <property type="gene ID" value="TraesKARUn01G0146420"/>
</dbReference>
<dbReference type="EnsemblPlants" id="TraesKARUn01G0149440.1">
    <property type="protein sequence ID" value="cds.TraesKARUn01G0149440.1"/>
    <property type="gene ID" value="TraesKARUn01G0149440"/>
</dbReference>
<dbReference type="EnsemblPlants" id="TraesKARUn01G0149920.1">
    <property type="protein sequence ID" value="cds.TraesKARUn01G0149920.1"/>
    <property type="gene ID" value="TraesKARUn01G0149920"/>
</dbReference>
<dbReference type="EnsemblPlants" id="TraesKARUn01G0151700.1">
    <property type="protein sequence ID" value="cds.TraesKARUn01G0151700.1"/>
    <property type="gene ID" value="TraesKARUn01G0151700"/>
</dbReference>
<dbReference type="EnsemblPlants" id="TraesKARUn01G0152220.1">
    <property type="protein sequence ID" value="cds.TraesKARUn01G0152220.1"/>
    <property type="gene ID" value="TraesKARUn01G0152220"/>
</dbReference>
<dbReference type="EnsemblPlants" id="TraesKARUn01G0153990.1">
    <property type="protein sequence ID" value="cds.TraesKARUn01G0153990.1"/>
    <property type="gene ID" value="TraesKARUn01G0153990"/>
</dbReference>
<dbReference type="EnsemblPlants" id="TraesKARUn01G0156550.1">
    <property type="protein sequence ID" value="cds.TraesKARUn01G0156550.1"/>
    <property type="gene ID" value="TraesKARUn01G0156550"/>
</dbReference>
<dbReference type="EnsemblPlants" id="TraesKARUn01G0157140.1">
    <property type="protein sequence ID" value="cds.TraesKARUn01G0157140.1"/>
    <property type="gene ID" value="TraesKARUn01G0157140"/>
</dbReference>
<dbReference type="EnsemblPlants" id="TraesKARUn01G0157230.1">
    <property type="protein sequence ID" value="cds.TraesKARUn01G0157230.1"/>
    <property type="gene ID" value="TraesKARUn01G0157230"/>
</dbReference>
<dbReference type="EnsemblPlants" id="TraesKARUn01G0157480.1">
    <property type="protein sequence ID" value="cds.TraesKARUn01G0157480.1"/>
    <property type="gene ID" value="TraesKARUn01G0157480"/>
</dbReference>
<dbReference type="EnsemblPlants" id="TraesKARUn01G0157940.1">
    <property type="protein sequence ID" value="cds.TraesKARUn01G0157940.1"/>
    <property type="gene ID" value="TraesKARUn01G0157940"/>
</dbReference>
<dbReference type="EnsemblPlants" id="TraesKARUn01G0158930.1">
    <property type="protein sequence ID" value="cds.TraesKARUn01G0158930.1"/>
    <property type="gene ID" value="TraesKARUn01G0158930"/>
</dbReference>
<dbReference type="EnsemblPlants" id="TraesKARUn01G0162220.1">
    <property type="protein sequence ID" value="cds.TraesKARUn01G0162220.1"/>
    <property type="gene ID" value="TraesKARUn01G0162220"/>
</dbReference>
<dbReference type="EnsemblPlants" id="TraesKARUn01G0162720.1">
    <property type="protein sequence ID" value="cds.TraesKARUn01G0162720.1"/>
    <property type="gene ID" value="TraesKARUn01G0162720"/>
</dbReference>
<dbReference type="EnsemblPlants" id="TraesKARUn01G0164160.1">
    <property type="protein sequence ID" value="cds.TraesKARUn01G0164160.1"/>
    <property type="gene ID" value="TraesKARUn01G0164160"/>
</dbReference>
<dbReference type="EnsemblPlants" id="TraesKARUn01G0164210.1">
    <property type="protein sequence ID" value="cds.TraesKARUn01G0164210.1"/>
    <property type="gene ID" value="TraesKARUn01G0164210"/>
</dbReference>
<dbReference type="EnsemblPlants" id="TraesKARUn01G0167220.1">
    <property type="protein sequence ID" value="cds.TraesKARUn01G0167220.1"/>
    <property type="gene ID" value="TraesKARUn01G0167220"/>
</dbReference>
<dbReference type="EnsemblPlants" id="TraesKARUn01G0167700.1">
    <property type="protein sequence ID" value="cds.TraesKARUn01G0167700.1"/>
    <property type="gene ID" value="TraesKARUn01G0167700"/>
</dbReference>
<dbReference type="EnsemblPlants" id="TraesKARUn01G0168210.1">
    <property type="protein sequence ID" value="cds.TraesKARUn01G0168210.1"/>
    <property type="gene ID" value="TraesKARUn01G0168210"/>
</dbReference>
<dbReference type="EnsemblPlants" id="TraesKARUn01G0169060.1">
    <property type="protein sequence ID" value="cds.TraesKARUn01G0169060.1"/>
    <property type="gene ID" value="TraesKARUn01G0169060"/>
</dbReference>
<dbReference type="EnsemblPlants" id="TraesKARUn01G0169230.1">
    <property type="protein sequence ID" value="cds.TraesKARUn01G0169230.1"/>
    <property type="gene ID" value="TraesKARUn01G0169230"/>
</dbReference>
<dbReference type="EnsemblPlants" id="TraesKARUn01G0169240.1">
    <property type="protein sequence ID" value="cds.TraesKARUn01G0169240.1"/>
    <property type="gene ID" value="TraesKARUn01G0169240"/>
</dbReference>
<dbReference type="EnsemblPlants" id="TraesKARUn01G0171770.1">
    <property type="protein sequence ID" value="cds.TraesKARUn01G0171770.1"/>
    <property type="gene ID" value="TraesKARUn01G0171770"/>
</dbReference>
<dbReference type="EnsemblPlants" id="TraesKARUn01G0172560.1">
    <property type="protein sequence ID" value="cds.TraesKARUn01G0172560.1"/>
    <property type="gene ID" value="TraesKARUn01G0172560"/>
</dbReference>
<dbReference type="EnsemblPlants" id="TraesKARUn01G0174410.1">
    <property type="protein sequence ID" value="cds.TraesKARUn01G0174410.1"/>
    <property type="gene ID" value="TraesKARUn01G0174410"/>
</dbReference>
<dbReference type="EnsemblPlants" id="TraesKARUn01G0180900.1">
    <property type="protein sequence ID" value="cds.TraesKARUn01G0180900.1"/>
    <property type="gene ID" value="TraesKARUn01G0180900"/>
</dbReference>
<dbReference type="EnsemblPlants" id="TraesKARUn01G0183280.1">
    <property type="protein sequence ID" value="cds.TraesKARUn01G0183280.1"/>
    <property type="gene ID" value="TraesKARUn01G0183280"/>
</dbReference>
<dbReference type="EnsemblPlants" id="TraesKARUn01G0183420.1">
    <property type="protein sequence ID" value="cds.TraesKARUn01G0183420.1"/>
    <property type="gene ID" value="TraesKARUn01G0183420"/>
</dbReference>
<dbReference type="EnsemblPlants" id="TraesKARUn01G0185320.1">
    <property type="protein sequence ID" value="cds.TraesKARUn01G0185320.1"/>
    <property type="gene ID" value="TraesKARUn01G0185320"/>
</dbReference>
<dbReference type="EnsemblPlants" id="TraesKARUn01G0185420.1">
    <property type="protein sequence ID" value="cds.TraesKARUn01G0185420.1"/>
    <property type="gene ID" value="TraesKARUn01G0185420"/>
</dbReference>
<dbReference type="EnsemblPlants" id="TraesKARUn01G0187460.1">
    <property type="protein sequence ID" value="cds.TraesKARUn01G0187460.1"/>
    <property type="gene ID" value="TraesKARUn01G0187460"/>
</dbReference>
<dbReference type="EnsemblPlants" id="TraesKARUn01G0188160.1">
    <property type="protein sequence ID" value="cds.TraesKARUn01G0188160.1"/>
    <property type="gene ID" value="TraesKARUn01G0188160"/>
</dbReference>
<dbReference type="EnsemblPlants" id="TraesKARUn01G0188730.1">
    <property type="protein sequence ID" value="cds.TraesKARUn01G0188730.1"/>
    <property type="gene ID" value="TraesKARUn01G0188730"/>
</dbReference>
<dbReference type="EnsemblPlants" id="TraesKARUn01G0189550.1">
    <property type="protein sequence ID" value="cds.TraesKARUn01G0189550.1"/>
    <property type="gene ID" value="TraesKARUn01G0189550"/>
</dbReference>
<dbReference type="EnsemblPlants" id="TraesKARUn01G0189710.1">
    <property type="protein sequence ID" value="cds.TraesKARUn01G0189710.1"/>
    <property type="gene ID" value="TraesKARUn01G0189710"/>
</dbReference>
<dbReference type="EnsemblPlants" id="TraesPARA_EIv1.0_2643440.1">
    <property type="protein sequence ID" value="TraesPARA_EIv1.0_2643440.1.CDS1"/>
    <property type="gene ID" value="TraesPARA_EIv1.0_2643440"/>
</dbReference>
<dbReference type="EnsemblPlants" id="TraesPARA_EIv1.0_2644070.1">
    <property type="protein sequence ID" value="TraesPARA_EIv1.0_2644070.1.CDS1"/>
    <property type="gene ID" value="TraesPARA_EIv1.0_2644070"/>
</dbReference>
<dbReference type="EnsemblPlants" id="TraesPARA_EIv1.0_2644490.1">
    <property type="protein sequence ID" value="TraesPARA_EIv1.0_2644490.1.CDS1"/>
    <property type="gene ID" value="TraesPARA_EIv1.0_2644490"/>
</dbReference>
<dbReference type="EnsemblPlants" id="TraesPARA_EIv1.0_2645540.1">
    <property type="protein sequence ID" value="TraesPARA_EIv1.0_2645540.1.CDS1"/>
    <property type="gene ID" value="TraesPARA_EIv1.0_2645540"/>
</dbReference>
<dbReference type="EnsemblPlants" id="TraesPARA_EIv1.0_2646110.1">
    <property type="protein sequence ID" value="TraesPARA_EIv1.0_2646110.1.CDS1"/>
    <property type="gene ID" value="TraesPARA_EIv1.0_2646110"/>
</dbReference>
<dbReference type="EnsemblPlants" id="TraesPARA_EIv1.0_2647090.1">
    <property type="protein sequence ID" value="TraesPARA_EIv1.0_2647090.1.CDS1"/>
    <property type="gene ID" value="TraesPARA_EIv1.0_2647090"/>
</dbReference>
<dbReference type="EnsemblPlants" id="TraesPARA_EIv1.0_2648510.1">
    <property type="protein sequence ID" value="TraesPARA_EIv1.0_2648510.1.CDS1"/>
    <property type="gene ID" value="TraesPARA_EIv1.0_2648510"/>
</dbReference>
<dbReference type="EnsemblPlants" id="TraesPARA_EIv1.0_2648730.1">
    <property type="protein sequence ID" value="TraesPARA_EIv1.0_2648730.1.CDS1"/>
    <property type="gene ID" value="TraesPARA_EIv1.0_2648730"/>
</dbReference>
<dbReference type="EnsemblPlants" id="TraesPARA_EIv1.0_2650000.1">
    <property type="protein sequence ID" value="TraesPARA_EIv1.0_2650000.1.CDS1"/>
    <property type="gene ID" value="TraesPARA_EIv1.0_2650000"/>
</dbReference>
<dbReference type="EnsemblPlants" id="TraesPARA_EIv1.0_2650500.1">
    <property type="protein sequence ID" value="TraesPARA_EIv1.0_2650500.1.CDS1"/>
    <property type="gene ID" value="TraesPARA_EIv1.0_2650500"/>
</dbReference>
<dbReference type="EnsemblPlants" id="TraesPARA_EIv1.0_2653340.1">
    <property type="protein sequence ID" value="TraesPARA_EIv1.0_2653340.1.CDS1"/>
    <property type="gene ID" value="TraesPARA_EIv1.0_2653340"/>
</dbReference>
<dbReference type="EnsemblPlants" id="TraesPARA_EIv1.0_2656150.1">
    <property type="protein sequence ID" value="TraesPARA_EIv1.0_2656150.1.CDS1"/>
    <property type="gene ID" value="TraesPARA_EIv1.0_2656150"/>
</dbReference>
<dbReference type="EnsemblPlants" id="TraesPARA_EIv1.0_2656860.1">
    <property type="protein sequence ID" value="TraesPARA_EIv1.0_2656860.1.CDS1"/>
    <property type="gene ID" value="TraesPARA_EIv1.0_2656860"/>
</dbReference>
<dbReference type="EnsemblPlants" id="TraesPARA_EIv1.0_2658450.1">
    <property type="protein sequence ID" value="TraesPARA_EIv1.0_2658450.1.CDS1"/>
    <property type="gene ID" value="TraesPARA_EIv1.0_2658450"/>
</dbReference>
<dbReference type="EnsemblPlants" id="TraesPARA_EIv1.0_2662950.1">
    <property type="protein sequence ID" value="TraesPARA_EIv1.0_2662950.1.CDS1"/>
    <property type="gene ID" value="TraesPARA_EIv1.0_2662950"/>
</dbReference>
<dbReference type="EnsemblPlants" id="TraesPARA_EIv1.0_2663200.1">
    <property type="protein sequence ID" value="TraesPARA_EIv1.0_2663200.1.CDS1"/>
    <property type="gene ID" value="TraesPARA_EIv1.0_2663200"/>
</dbReference>
<dbReference type="EnsemblPlants" id="TraesPARA_EIv1.0_2663620.1">
    <property type="protein sequence ID" value="TraesPARA_EIv1.0_2663620.1.CDS1"/>
    <property type="gene ID" value="TraesPARA_EIv1.0_2663620"/>
</dbReference>
<dbReference type="EnsemblPlants" id="TraesPARA_EIv1.0_2663840.1">
    <property type="protein sequence ID" value="TraesPARA_EIv1.0_2663840.1.CDS1"/>
    <property type="gene ID" value="TraesPARA_EIv1.0_2663840"/>
</dbReference>
<dbReference type="EnsemblPlants" id="TraesPARA_EIv1.0_2666450.1">
    <property type="protein sequence ID" value="TraesPARA_EIv1.0_2666450.1.CDS1"/>
    <property type="gene ID" value="TraesPARA_EIv1.0_2666450"/>
</dbReference>
<dbReference type="EnsemblPlants" id="TraesPARA_EIv1.0_2667700.1">
    <property type="protein sequence ID" value="TraesPARA_EIv1.0_2667700.1.CDS1"/>
    <property type="gene ID" value="TraesPARA_EIv1.0_2667700"/>
</dbReference>
<dbReference type="EnsemblPlants" id="TraesPARA_EIv1.0_2680170.1">
    <property type="protein sequence ID" value="TraesPARA_EIv1.0_2680170.1.CDS1"/>
    <property type="gene ID" value="TraesPARA_EIv1.0_2680170"/>
</dbReference>
<dbReference type="EnsemblPlants" id="TraesPARA_EIv1.0_2680470.1">
    <property type="protein sequence ID" value="TraesPARA_EIv1.0_2680470.1.CDS1"/>
    <property type="gene ID" value="TraesPARA_EIv1.0_2680470"/>
</dbReference>
<dbReference type="EnsemblPlants" id="TraesPARA_EIv1.0_2681780.1">
    <property type="protein sequence ID" value="TraesPARA_EIv1.0_2681780.1.CDS1"/>
    <property type="gene ID" value="TraesPARA_EIv1.0_2681780"/>
</dbReference>
<dbReference type="EnsemblPlants" id="TraesPARA_EIv1.0_2682120.1">
    <property type="protein sequence ID" value="TraesPARA_EIv1.0_2682120.1.CDS1"/>
    <property type="gene ID" value="TraesPARA_EIv1.0_2682120"/>
</dbReference>
<dbReference type="EnsemblPlants" id="TraesSYM3B03G01564080.1">
    <property type="protein sequence ID" value="TraesSYM3B03G01564080.1.CDS1"/>
    <property type="gene ID" value="TraesSYM3B03G01564080"/>
</dbReference>
<dbReference type="GeneID" id="803208"/>
<dbReference type="Gramene" id="TraesKAR2D01G0025660.1">
    <property type="protein sequence ID" value="cds.TraesKAR2D01G0025660.1"/>
    <property type="gene ID" value="TraesKAR2D01G0025660"/>
</dbReference>
<dbReference type="Gramene" id="TraesKAR6B01G0219460.1">
    <property type="protein sequence ID" value="cds.TraesKAR6B01G0219460.1"/>
    <property type="gene ID" value="TraesKAR6B01G0219460"/>
</dbReference>
<dbReference type="Gramene" id="TraesKAR6B01G0220210.1">
    <property type="protein sequence ID" value="cds.TraesKAR6B01G0220210.1"/>
    <property type="gene ID" value="TraesKAR6B01G0220210"/>
</dbReference>
<dbReference type="Gramene" id="TraesKAR7A01G0472580.1">
    <property type="protein sequence ID" value="cds.TraesKAR7A01G0472580.1"/>
    <property type="gene ID" value="TraesKAR7A01G0472580"/>
</dbReference>
<dbReference type="Gramene" id="TraesKARUn01G0026340.1">
    <property type="protein sequence ID" value="cds.TraesKARUn01G0026340.1"/>
    <property type="gene ID" value="TraesKARUn01G0026340"/>
</dbReference>
<dbReference type="Gramene" id="TraesKARUn01G0028480.1">
    <property type="protein sequence ID" value="cds.TraesKARUn01G0028480.1"/>
    <property type="gene ID" value="TraesKARUn01G0028480"/>
</dbReference>
<dbReference type="Gramene" id="TraesKARUn01G0028820.1">
    <property type="protein sequence ID" value="cds.TraesKARUn01G0028820.1"/>
    <property type="gene ID" value="TraesKARUn01G0028820"/>
</dbReference>
<dbReference type="Gramene" id="TraesKARUn01G0031390.1">
    <property type="protein sequence ID" value="cds.TraesKARUn01G0031390.1"/>
    <property type="gene ID" value="TraesKARUn01G0031390"/>
</dbReference>
<dbReference type="Gramene" id="TraesKARUn01G0031710.1">
    <property type="protein sequence ID" value="cds.TraesKARUn01G0031710.1"/>
    <property type="gene ID" value="TraesKARUn01G0031710"/>
</dbReference>
<dbReference type="Gramene" id="TraesKARUn01G0031780.1">
    <property type="protein sequence ID" value="cds.TraesKARUn01G0031780.1"/>
    <property type="gene ID" value="TraesKARUn01G0031780"/>
</dbReference>
<dbReference type="Gramene" id="TraesKARUn01G0032660.1">
    <property type="protein sequence ID" value="cds.TraesKARUn01G0032660.1"/>
    <property type="gene ID" value="TraesKARUn01G0032660"/>
</dbReference>
<dbReference type="Gramene" id="TraesKARUn01G0032820.1">
    <property type="protein sequence ID" value="cds.TraesKARUn01G0032820.1"/>
    <property type="gene ID" value="TraesKARUn01G0032820"/>
</dbReference>
<dbReference type="Gramene" id="TraesKARUn01G0033470.1">
    <property type="protein sequence ID" value="cds.TraesKARUn01G0033470.1"/>
    <property type="gene ID" value="TraesKARUn01G0033470"/>
</dbReference>
<dbReference type="Gramene" id="TraesKARUn01G0034670.1">
    <property type="protein sequence ID" value="cds.TraesKARUn01G0034670.1"/>
    <property type="gene ID" value="TraesKARUn01G0034670"/>
</dbReference>
<dbReference type="Gramene" id="TraesKARUn01G0060290.1">
    <property type="protein sequence ID" value="cds.TraesKARUn01G0060290.1"/>
    <property type="gene ID" value="TraesKARUn01G0060290"/>
</dbReference>
<dbReference type="Gramene" id="TraesKARUn01G0068370.1">
    <property type="protein sequence ID" value="cds.TraesKARUn01G0068370.1"/>
    <property type="gene ID" value="TraesKARUn01G0068370"/>
</dbReference>
<dbReference type="Gramene" id="TraesKARUn01G0074880.1">
    <property type="protein sequence ID" value="cds.TraesKARUn01G0074880.1"/>
    <property type="gene ID" value="TraesKARUn01G0074880"/>
</dbReference>
<dbReference type="Gramene" id="TraesKARUn01G0074940.1">
    <property type="protein sequence ID" value="cds.TraesKARUn01G0074940.1"/>
    <property type="gene ID" value="TraesKARUn01G0074940"/>
</dbReference>
<dbReference type="Gramene" id="TraesKARUn01G0078120.1">
    <property type="protein sequence ID" value="cds.TraesKARUn01G0078120.1"/>
    <property type="gene ID" value="TraesKARUn01G0078120"/>
</dbReference>
<dbReference type="Gramene" id="TraesKARUn01G0080360.1">
    <property type="protein sequence ID" value="cds.TraesKARUn01G0080360.1"/>
    <property type="gene ID" value="TraesKARUn01G0080360"/>
</dbReference>
<dbReference type="Gramene" id="TraesKARUn01G0085110.1">
    <property type="protein sequence ID" value="cds.TraesKARUn01G0085110.1"/>
    <property type="gene ID" value="TraesKARUn01G0085110"/>
</dbReference>
<dbReference type="Gramene" id="TraesKARUn01G0086200.1">
    <property type="protein sequence ID" value="cds.TraesKARUn01G0086200.1"/>
    <property type="gene ID" value="TraesKARUn01G0086200"/>
</dbReference>
<dbReference type="Gramene" id="TraesKARUn01G0089230.1">
    <property type="protein sequence ID" value="cds.TraesKARUn01G0089230.1"/>
    <property type="gene ID" value="TraesKARUn01G0089230"/>
</dbReference>
<dbReference type="Gramene" id="TraesKARUn01G0091100.1">
    <property type="protein sequence ID" value="cds.TraesKARUn01G0091100.1"/>
    <property type="gene ID" value="TraesKARUn01G0091100"/>
</dbReference>
<dbReference type="Gramene" id="TraesKARUn01G0093490.1">
    <property type="protein sequence ID" value="cds.TraesKARUn01G0093490.1"/>
    <property type="gene ID" value="TraesKARUn01G0093490"/>
</dbReference>
<dbReference type="Gramene" id="TraesKARUn01G0095780.1">
    <property type="protein sequence ID" value="cds.TraesKARUn01G0095780.1"/>
    <property type="gene ID" value="TraesKARUn01G0095780"/>
</dbReference>
<dbReference type="Gramene" id="TraesKARUn01G0095920.1">
    <property type="protein sequence ID" value="cds.TraesKARUn01G0095920.1"/>
    <property type="gene ID" value="TraesKARUn01G0095920"/>
</dbReference>
<dbReference type="Gramene" id="TraesKARUn01G0097180.1">
    <property type="protein sequence ID" value="cds.TraesKARUn01G0097180.1"/>
    <property type="gene ID" value="TraesKARUn01G0097180"/>
</dbReference>
<dbReference type="Gramene" id="TraesKARUn01G0097770.1">
    <property type="protein sequence ID" value="cds.TraesKARUn01G0097770.1"/>
    <property type="gene ID" value="TraesKARUn01G0097770"/>
</dbReference>
<dbReference type="Gramene" id="TraesKARUn01G0098740.1">
    <property type="protein sequence ID" value="cds.TraesKARUn01G0098740.1"/>
    <property type="gene ID" value="TraesKARUn01G0098740"/>
</dbReference>
<dbReference type="Gramene" id="TraesKARUn01G0101740.1">
    <property type="protein sequence ID" value="cds.TraesKARUn01G0101740.1"/>
    <property type="gene ID" value="TraesKARUn01G0101740"/>
</dbReference>
<dbReference type="Gramene" id="TraesKARUn01G0101980.1">
    <property type="protein sequence ID" value="cds.TraesKARUn01G0101980.1"/>
    <property type="gene ID" value="TraesKARUn01G0101980"/>
</dbReference>
<dbReference type="Gramene" id="TraesKARUn01G0103880.1">
    <property type="protein sequence ID" value="cds.TraesKARUn01G0103880.1"/>
    <property type="gene ID" value="TraesKARUn01G0103880"/>
</dbReference>
<dbReference type="Gramene" id="TraesKARUn01G0104440.1">
    <property type="protein sequence ID" value="cds.TraesKARUn01G0104440.1"/>
    <property type="gene ID" value="TraesKARUn01G0104440"/>
</dbReference>
<dbReference type="Gramene" id="TraesKARUn01G0105700.1">
    <property type="protein sequence ID" value="cds.TraesKARUn01G0105700.1"/>
    <property type="gene ID" value="TraesKARUn01G0105700"/>
</dbReference>
<dbReference type="Gramene" id="TraesKARUn01G0106230.1">
    <property type="protein sequence ID" value="cds.TraesKARUn01G0106230.1"/>
    <property type="gene ID" value="TraesKARUn01G0106230"/>
</dbReference>
<dbReference type="Gramene" id="TraesKARUn01G0106820.1">
    <property type="protein sequence ID" value="cds.TraesKARUn01G0106820.1"/>
    <property type="gene ID" value="TraesKARUn01G0106820"/>
</dbReference>
<dbReference type="Gramene" id="TraesKARUn01G0106940.1">
    <property type="protein sequence ID" value="cds.TraesKARUn01G0106940.1"/>
    <property type="gene ID" value="TraesKARUn01G0106940"/>
</dbReference>
<dbReference type="Gramene" id="TraesKARUn01G0106990.1">
    <property type="protein sequence ID" value="cds.TraesKARUn01G0106990.1"/>
    <property type="gene ID" value="TraesKARUn01G0106990"/>
</dbReference>
<dbReference type="Gramene" id="TraesKARUn01G0107180.1">
    <property type="protein sequence ID" value="cds.TraesKARUn01G0107180.1"/>
    <property type="gene ID" value="TraesKARUn01G0107180"/>
</dbReference>
<dbReference type="Gramene" id="TraesKARUn01G0107290.1">
    <property type="protein sequence ID" value="cds.TraesKARUn01G0107290.1"/>
    <property type="gene ID" value="TraesKARUn01G0107290"/>
</dbReference>
<dbReference type="Gramene" id="TraesKARUn01G0107790.1">
    <property type="protein sequence ID" value="cds.TraesKARUn01G0107790.1"/>
    <property type="gene ID" value="TraesKARUn01G0107790"/>
</dbReference>
<dbReference type="Gramene" id="TraesKARUn01G0109440.1">
    <property type="protein sequence ID" value="cds.TraesKARUn01G0109440.1"/>
    <property type="gene ID" value="TraesKARUn01G0109440"/>
</dbReference>
<dbReference type="Gramene" id="TraesKARUn01G0110060.1">
    <property type="protein sequence ID" value="cds.TraesKARUn01G0110060.1"/>
    <property type="gene ID" value="TraesKARUn01G0110060"/>
</dbReference>
<dbReference type="Gramene" id="TraesKARUn01G0113490.1">
    <property type="protein sequence ID" value="cds.TraesKARUn01G0113490.1"/>
    <property type="gene ID" value="TraesKARUn01G0113490"/>
</dbReference>
<dbReference type="Gramene" id="TraesKARUn01G0115050.1">
    <property type="protein sequence ID" value="cds.TraesKARUn01G0115050.1"/>
    <property type="gene ID" value="TraesKARUn01G0115050"/>
</dbReference>
<dbReference type="Gramene" id="TraesKARUn01G0115390.1">
    <property type="protein sequence ID" value="cds.TraesKARUn01G0115390.1"/>
    <property type="gene ID" value="TraesKARUn01G0115390"/>
</dbReference>
<dbReference type="Gramene" id="TraesKARUn01G0116070.1">
    <property type="protein sequence ID" value="cds.TraesKARUn01G0116070.1"/>
    <property type="gene ID" value="TraesKARUn01G0116070"/>
</dbReference>
<dbReference type="Gramene" id="TraesKARUn01G0119460.1">
    <property type="protein sequence ID" value="cds.TraesKARUn01G0119460.1"/>
    <property type="gene ID" value="TraesKARUn01G0119460"/>
</dbReference>
<dbReference type="Gramene" id="TraesKARUn01G0121970.1">
    <property type="protein sequence ID" value="cds.TraesKARUn01G0121970.1"/>
    <property type="gene ID" value="TraesKARUn01G0121970"/>
</dbReference>
<dbReference type="Gramene" id="TraesKARUn01G0122310.1">
    <property type="protein sequence ID" value="cds.TraesKARUn01G0122310.1"/>
    <property type="gene ID" value="TraesKARUn01G0122310"/>
</dbReference>
<dbReference type="Gramene" id="TraesKARUn01G0123420.1">
    <property type="protein sequence ID" value="cds.TraesKARUn01G0123420.1"/>
    <property type="gene ID" value="TraesKARUn01G0123420"/>
</dbReference>
<dbReference type="Gramene" id="TraesKARUn01G0123590.1">
    <property type="protein sequence ID" value="cds.TraesKARUn01G0123590.1"/>
    <property type="gene ID" value="TraesKARUn01G0123590"/>
</dbReference>
<dbReference type="Gramene" id="TraesKARUn01G0125840.1">
    <property type="protein sequence ID" value="cds.TraesKARUn01G0125840.1"/>
    <property type="gene ID" value="TraesKARUn01G0125840"/>
</dbReference>
<dbReference type="Gramene" id="TraesKARUn01G0127950.1">
    <property type="protein sequence ID" value="cds.TraesKARUn01G0127950.1"/>
    <property type="gene ID" value="TraesKARUn01G0127950"/>
</dbReference>
<dbReference type="Gramene" id="TraesKARUn01G0128050.1">
    <property type="protein sequence ID" value="cds.TraesKARUn01G0128050.1"/>
    <property type="gene ID" value="TraesKARUn01G0128050"/>
</dbReference>
<dbReference type="Gramene" id="TraesKARUn01G0128250.1">
    <property type="protein sequence ID" value="cds.TraesKARUn01G0128250.1"/>
    <property type="gene ID" value="TraesKARUn01G0128250"/>
</dbReference>
<dbReference type="Gramene" id="TraesKARUn01G0129170.1">
    <property type="protein sequence ID" value="cds.TraesKARUn01G0129170.1"/>
    <property type="gene ID" value="TraesKARUn01G0129170"/>
</dbReference>
<dbReference type="Gramene" id="TraesKARUn01G0130020.1">
    <property type="protein sequence ID" value="cds.TraesKARUn01G0130020.1"/>
    <property type="gene ID" value="TraesKARUn01G0130020"/>
</dbReference>
<dbReference type="Gramene" id="TraesKARUn01G0130210.1">
    <property type="protein sequence ID" value="cds.TraesKARUn01G0130210.1"/>
    <property type="gene ID" value="TraesKARUn01G0130210"/>
</dbReference>
<dbReference type="Gramene" id="TraesKARUn01G0131090.1">
    <property type="protein sequence ID" value="cds.TraesKARUn01G0131090.1"/>
    <property type="gene ID" value="TraesKARUn01G0131090"/>
</dbReference>
<dbReference type="Gramene" id="TraesKARUn01G0132020.1">
    <property type="protein sequence ID" value="cds.TraesKARUn01G0132020.1"/>
    <property type="gene ID" value="TraesKARUn01G0132020"/>
</dbReference>
<dbReference type="Gramene" id="TraesKARUn01G0133720.1">
    <property type="protein sequence ID" value="cds.TraesKARUn01G0133720.1"/>
    <property type="gene ID" value="TraesKARUn01G0133720"/>
</dbReference>
<dbReference type="Gramene" id="TraesKARUn01G0133920.1">
    <property type="protein sequence ID" value="cds.TraesKARUn01G0133920.1"/>
    <property type="gene ID" value="TraesKARUn01G0133920"/>
</dbReference>
<dbReference type="Gramene" id="TraesKARUn01G0134630.1">
    <property type="protein sequence ID" value="cds.TraesKARUn01G0134630.1"/>
    <property type="gene ID" value="TraesKARUn01G0134630"/>
</dbReference>
<dbReference type="Gramene" id="TraesKARUn01G0134970.1">
    <property type="protein sequence ID" value="cds.TraesKARUn01G0134970.1"/>
    <property type="gene ID" value="TraesKARUn01G0134970"/>
</dbReference>
<dbReference type="Gramene" id="TraesKARUn01G0135370.1">
    <property type="protein sequence ID" value="cds.TraesKARUn01G0135370.1"/>
    <property type="gene ID" value="TraesKARUn01G0135370"/>
</dbReference>
<dbReference type="Gramene" id="TraesKARUn01G0136250.1">
    <property type="protein sequence ID" value="cds.TraesKARUn01G0136250.1"/>
    <property type="gene ID" value="TraesKARUn01G0136250"/>
</dbReference>
<dbReference type="Gramene" id="TraesKARUn01G0136340.1">
    <property type="protein sequence ID" value="cds.TraesKARUn01G0136340.1"/>
    <property type="gene ID" value="TraesKARUn01G0136340"/>
</dbReference>
<dbReference type="Gramene" id="TraesKARUn01G0137220.1">
    <property type="protein sequence ID" value="cds.TraesKARUn01G0137220.1"/>
    <property type="gene ID" value="TraesKARUn01G0137220"/>
</dbReference>
<dbReference type="Gramene" id="TraesKARUn01G0137620.1">
    <property type="protein sequence ID" value="cds.TraesKARUn01G0137620.1"/>
    <property type="gene ID" value="TraesKARUn01G0137620"/>
</dbReference>
<dbReference type="Gramene" id="TraesKARUn01G0138610.1">
    <property type="protein sequence ID" value="cds.TraesKARUn01G0138610.1"/>
    <property type="gene ID" value="TraesKARUn01G0138610"/>
</dbReference>
<dbReference type="Gramene" id="TraesKARUn01G0140320.1">
    <property type="protein sequence ID" value="cds.TraesKARUn01G0140320.1"/>
    <property type="gene ID" value="TraesKARUn01G0140320"/>
</dbReference>
<dbReference type="Gramene" id="TraesKARUn01G0141310.1">
    <property type="protein sequence ID" value="cds.TraesKARUn01G0141310.1"/>
    <property type="gene ID" value="TraesKARUn01G0141310"/>
</dbReference>
<dbReference type="Gramene" id="TraesKARUn01G0145720.1">
    <property type="protein sequence ID" value="cds.TraesKARUn01G0145720.1"/>
    <property type="gene ID" value="TraesKARUn01G0145720"/>
</dbReference>
<dbReference type="Gramene" id="TraesKARUn01G0146210.1">
    <property type="protein sequence ID" value="cds.TraesKARUn01G0146210.1"/>
    <property type="gene ID" value="TraesKARUn01G0146210"/>
</dbReference>
<dbReference type="Gramene" id="TraesKARUn01G0146420.1">
    <property type="protein sequence ID" value="cds.TraesKARUn01G0146420.1"/>
    <property type="gene ID" value="TraesKARUn01G0146420"/>
</dbReference>
<dbReference type="Gramene" id="TraesKARUn01G0149440.1">
    <property type="protein sequence ID" value="cds.TraesKARUn01G0149440.1"/>
    <property type="gene ID" value="TraesKARUn01G0149440"/>
</dbReference>
<dbReference type="Gramene" id="TraesKARUn01G0149920.1">
    <property type="protein sequence ID" value="cds.TraesKARUn01G0149920.1"/>
    <property type="gene ID" value="TraesKARUn01G0149920"/>
</dbReference>
<dbReference type="Gramene" id="TraesKARUn01G0151700.1">
    <property type="protein sequence ID" value="cds.TraesKARUn01G0151700.1"/>
    <property type="gene ID" value="TraesKARUn01G0151700"/>
</dbReference>
<dbReference type="Gramene" id="TraesKARUn01G0152220.1">
    <property type="protein sequence ID" value="cds.TraesKARUn01G0152220.1"/>
    <property type="gene ID" value="TraesKARUn01G0152220"/>
</dbReference>
<dbReference type="Gramene" id="TraesKARUn01G0153990.1">
    <property type="protein sequence ID" value="cds.TraesKARUn01G0153990.1"/>
    <property type="gene ID" value="TraesKARUn01G0153990"/>
</dbReference>
<dbReference type="Gramene" id="TraesKARUn01G0156550.1">
    <property type="protein sequence ID" value="cds.TraesKARUn01G0156550.1"/>
    <property type="gene ID" value="TraesKARUn01G0156550"/>
</dbReference>
<dbReference type="Gramene" id="TraesKARUn01G0157140.1">
    <property type="protein sequence ID" value="cds.TraesKARUn01G0157140.1"/>
    <property type="gene ID" value="TraesKARUn01G0157140"/>
</dbReference>
<dbReference type="Gramene" id="TraesKARUn01G0157230.1">
    <property type="protein sequence ID" value="cds.TraesKARUn01G0157230.1"/>
    <property type="gene ID" value="TraesKARUn01G0157230"/>
</dbReference>
<dbReference type="Gramene" id="TraesKARUn01G0157480.1">
    <property type="protein sequence ID" value="cds.TraesKARUn01G0157480.1"/>
    <property type="gene ID" value="TraesKARUn01G0157480"/>
</dbReference>
<dbReference type="Gramene" id="TraesKARUn01G0157940.1">
    <property type="protein sequence ID" value="cds.TraesKARUn01G0157940.1"/>
    <property type="gene ID" value="TraesKARUn01G0157940"/>
</dbReference>
<dbReference type="Gramene" id="TraesKARUn01G0158930.1">
    <property type="protein sequence ID" value="cds.TraesKARUn01G0158930.1"/>
    <property type="gene ID" value="TraesKARUn01G0158930"/>
</dbReference>
<dbReference type="Gramene" id="TraesKARUn01G0162220.1">
    <property type="protein sequence ID" value="cds.TraesKARUn01G0162220.1"/>
    <property type="gene ID" value="TraesKARUn01G0162220"/>
</dbReference>
<dbReference type="Gramene" id="TraesKARUn01G0162720.1">
    <property type="protein sequence ID" value="cds.TraesKARUn01G0162720.1"/>
    <property type="gene ID" value="TraesKARUn01G0162720"/>
</dbReference>
<dbReference type="Gramene" id="TraesKARUn01G0164160.1">
    <property type="protein sequence ID" value="cds.TraesKARUn01G0164160.1"/>
    <property type="gene ID" value="TraesKARUn01G0164160"/>
</dbReference>
<dbReference type="Gramene" id="TraesKARUn01G0164210.1">
    <property type="protein sequence ID" value="cds.TraesKARUn01G0164210.1"/>
    <property type="gene ID" value="TraesKARUn01G0164210"/>
</dbReference>
<dbReference type="Gramene" id="TraesKARUn01G0167220.1">
    <property type="protein sequence ID" value="cds.TraesKARUn01G0167220.1"/>
    <property type="gene ID" value="TraesKARUn01G0167220"/>
</dbReference>
<dbReference type="Gramene" id="TraesKARUn01G0167700.1">
    <property type="protein sequence ID" value="cds.TraesKARUn01G0167700.1"/>
    <property type="gene ID" value="TraesKARUn01G0167700"/>
</dbReference>
<dbReference type="Gramene" id="TraesKARUn01G0168210.1">
    <property type="protein sequence ID" value="cds.TraesKARUn01G0168210.1"/>
    <property type="gene ID" value="TraesKARUn01G0168210"/>
</dbReference>
<dbReference type="Gramene" id="TraesKARUn01G0169060.1">
    <property type="protein sequence ID" value="cds.TraesKARUn01G0169060.1"/>
    <property type="gene ID" value="TraesKARUn01G0169060"/>
</dbReference>
<dbReference type="Gramene" id="TraesKARUn01G0169230.1">
    <property type="protein sequence ID" value="cds.TraesKARUn01G0169230.1"/>
    <property type="gene ID" value="TraesKARUn01G0169230"/>
</dbReference>
<dbReference type="Gramene" id="TraesKARUn01G0169240.1">
    <property type="protein sequence ID" value="cds.TraesKARUn01G0169240.1"/>
    <property type="gene ID" value="TraesKARUn01G0169240"/>
</dbReference>
<dbReference type="Gramene" id="TraesKARUn01G0171770.1">
    <property type="protein sequence ID" value="cds.TraesKARUn01G0171770.1"/>
    <property type="gene ID" value="TraesKARUn01G0171770"/>
</dbReference>
<dbReference type="Gramene" id="TraesKARUn01G0172560.1">
    <property type="protein sequence ID" value="cds.TraesKARUn01G0172560.1"/>
    <property type="gene ID" value="TraesKARUn01G0172560"/>
</dbReference>
<dbReference type="Gramene" id="TraesKARUn01G0174410.1">
    <property type="protein sequence ID" value="cds.TraesKARUn01G0174410.1"/>
    <property type="gene ID" value="TraesKARUn01G0174410"/>
</dbReference>
<dbReference type="Gramene" id="TraesKARUn01G0180900.1">
    <property type="protein sequence ID" value="cds.TraesKARUn01G0180900.1"/>
    <property type="gene ID" value="TraesKARUn01G0180900"/>
</dbReference>
<dbReference type="Gramene" id="TraesKARUn01G0183280.1">
    <property type="protein sequence ID" value="cds.TraesKARUn01G0183280.1"/>
    <property type="gene ID" value="TraesKARUn01G0183280"/>
</dbReference>
<dbReference type="Gramene" id="TraesKARUn01G0183420.1">
    <property type="protein sequence ID" value="cds.TraesKARUn01G0183420.1"/>
    <property type="gene ID" value="TraesKARUn01G0183420"/>
</dbReference>
<dbReference type="Gramene" id="TraesKARUn01G0185320.1">
    <property type="protein sequence ID" value="cds.TraesKARUn01G0185320.1"/>
    <property type="gene ID" value="TraesKARUn01G0185320"/>
</dbReference>
<dbReference type="Gramene" id="TraesKARUn01G0185420.1">
    <property type="protein sequence ID" value="cds.TraesKARUn01G0185420.1"/>
    <property type="gene ID" value="TraesKARUn01G0185420"/>
</dbReference>
<dbReference type="Gramene" id="TraesKARUn01G0187460.1">
    <property type="protein sequence ID" value="cds.TraesKARUn01G0187460.1"/>
    <property type="gene ID" value="TraesKARUn01G0187460"/>
</dbReference>
<dbReference type="Gramene" id="TraesKARUn01G0188160.1">
    <property type="protein sequence ID" value="cds.TraesKARUn01G0188160.1"/>
    <property type="gene ID" value="TraesKARUn01G0188160"/>
</dbReference>
<dbReference type="Gramene" id="TraesKARUn01G0188730.1">
    <property type="protein sequence ID" value="cds.TraesKARUn01G0188730.1"/>
    <property type="gene ID" value="TraesKARUn01G0188730"/>
</dbReference>
<dbReference type="Gramene" id="TraesKARUn01G0189550.1">
    <property type="protein sequence ID" value="cds.TraesKARUn01G0189550.1"/>
    <property type="gene ID" value="TraesKARUn01G0189550"/>
</dbReference>
<dbReference type="Gramene" id="TraesKARUn01G0189710.1">
    <property type="protein sequence ID" value="cds.TraesKARUn01G0189710.1"/>
    <property type="gene ID" value="TraesKARUn01G0189710"/>
</dbReference>
<dbReference type="Gramene" id="TraesPARA_EIv1.0_2643440.1">
    <property type="protein sequence ID" value="TraesPARA_EIv1.0_2643440.1.CDS1"/>
    <property type="gene ID" value="TraesPARA_EIv1.0_2643440"/>
</dbReference>
<dbReference type="Gramene" id="TraesPARA_EIv1.0_2644070.1">
    <property type="protein sequence ID" value="TraesPARA_EIv1.0_2644070.1.CDS1"/>
    <property type="gene ID" value="TraesPARA_EIv1.0_2644070"/>
</dbReference>
<dbReference type="Gramene" id="TraesPARA_EIv1.0_2644490.1">
    <property type="protein sequence ID" value="TraesPARA_EIv1.0_2644490.1.CDS1"/>
    <property type="gene ID" value="TraesPARA_EIv1.0_2644490"/>
</dbReference>
<dbReference type="Gramene" id="TraesPARA_EIv1.0_2645540.1">
    <property type="protein sequence ID" value="TraesPARA_EIv1.0_2645540.1.CDS1"/>
    <property type="gene ID" value="TraesPARA_EIv1.0_2645540"/>
</dbReference>
<dbReference type="Gramene" id="TraesPARA_EIv1.0_2646110.1">
    <property type="protein sequence ID" value="TraesPARA_EIv1.0_2646110.1.CDS1"/>
    <property type="gene ID" value="TraesPARA_EIv1.0_2646110"/>
</dbReference>
<dbReference type="Gramene" id="TraesPARA_EIv1.0_2647090.1">
    <property type="protein sequence ID" value="TraesPARA_EIv1.0_2647090.1.CDS1"/>
    <property type="gene ID" value="TraesPARA_EIv1.0_2647090"/>
</dbReference>
<dbReference type="Gramene" id="TraesPARA_EIv1.0_2648510.1">
    <property type="protein sequence ID" value="TraesPARA_EIv1.0_2648510.1.CDS1"/>
    <property type="gene ID" value="TraesPARA_EIv1.0_2648510"/>
</dbReference>
<dbReference type="Gramene" id="TraesPARA_EIv1.0_2648730.1">
    <property type="protein sequence ID" value="TraesPARA_EIv1.0_2648730.1.CDS1"/>
    <property type="gene ID" value="TraesPARA_EIv1.0_2648730"/>
</dbReference>
<dbReference type="Gramene" id="TraesPARA_EIv1.0_2650000.1">
    <property type="protein sequence ID" value="TraesPARA_EIv1.0_2650000.1.CDS1"/>
    <property type="gene ID" value="TraesPARA_EIv1.0_2650000"/>
</dbReference>
<dbReference type="Gramene" id="TraesPARA_EIv1.0_2650500.1">
    <property type="protein sequence ID" value="TraesPARA_EIv1.0_2650500.1.CDS1"/>
    <property type="gene ID" value="TraesPARA_EIv1.0_2650500"/>
</dbReference>
<dbReference type="Gramene" id="TraesPARA_EIv1.0_2653340.1">
    <property type="protein sequence ID" value="TraesPARA_EIv1.0_2653340.1.CDS1"/>
    <property type="gene ID" value="TraesPARA_EIv1.0_2653340"/>
</dbReference>
<dbReference type="Gramene" id="TraesPARA_EIv1.0_2656150.1">
    <property type="protein sequence ID" value="TraesPARA_EIv1.0_2656150.1.CDS1"/>
    <property type="gene ID" value="TraesPARA_EIv1.0_2656150"/>
</dbReference>
<dbReference type="Gramene" id="TraesPARA_EIv1.0_2656860.1">
    <property type="protein sequence ID" value="TraesPARA_EIv1.0_2656860.1.CDS1"/>
    <property type="gene ID" value="TraesPARA_EIv1.0_2656860"/>
</dbReference>
<dbReference type="Gramene" id="TraesPARA_EIv1.0_2658450.1">
    <property type="protein sequence ID" value="TraesPARA_EIv1.0_2658450.1.CDS1"/>
    <property type="gene ID" value="TraesPARA_EIv1.0_2658450"/>
</dbReference>
<dbReference type="Gramene" id="TraesPARA_EIv1.0_2662950.1">
    <property type="protein sequence ID" value="TraesPARA_EIv1.0_2662950.1.CDS1"/>
    <property type="gene ID" value="TraesPARA_EIv1.0_2662950"/>
</dbReference>
<dbReference type="Gramene" id="TraesPARA_EIv1.0_2663200.1">
    <property type="protein sequence ID" value="TraesPARA_EIv1.0_2663200.1.CDS1"/>
    <property type="gene ID" value="TraesPARA_EIv1.0_2663200"/>
</dbReference>
<dbReference type="Gramene" id="TraesPARA_EIv1.0_2663620.1">
    <property type="protein sequence ID" value="TraesPARA_EIv1.0_2663620.1.CDS1"/>
    <property type="gene ID" value="TraesPARA_EIv1.0_2663620"/>
</dbReference>
<dbReference type="Gramene" id="TraesPARA_EIv1.0_2663840.1">
    <property type="protein sequence ID" value="TraesPARA_EIv1.0_2663840.1.CDS1"/>
    <property type="gene ID" value="TraesPARA_EIv1.0_2663840"/>
</dbReference>
<dbReference type="Gramene" id="TraesPARA_EIv1.0_2666450.1">
    <property type="protein sequence ID" value="TraesPARA_EIv1.0_2666450.1.CDS1"/>
    <property type="gene ID" value="TraesPARA_EIv1.0_2666450"/>
</dbReference>
<dbReference type="Gramene" id="TraesPARA_EIv1.0_2667700.1">
    <property type="protein sequence ID" value="TraesPARA_EIv1.0_2667700.1.CDS1"/>
    <property type="gene ID" value="TraesPARA_EIv1.0_2667700"/>
</dbReference>
<dbReference type="Gramene" id="TraesPARA_EIv1.0_2680170.1">
    <property type="protein sequence ID" value="TraesPARA_EIv1.0_2680170.1.CDS1"/>
    <property type="gene ID" value="TraesPARA_EIv1.0_2680170"/>
</dbReference>
<dbReference type="Gramene" id="TraesPARA_EIv1.0_2680470.1">
    <property type="protein sequence ID" value="TraesPARA_EIv1.0_2680470.1.CDS1"/>
    <property type="gene ID" value="TraesPARA_EIv1.0_2680470"/>
</dbReference>
<dbReference type="Gramene" id="TraesPARA_EIv1.0_2681780.1">
    <property type="protein sequence ID" value="TraesPARA_EIv1.0_2681780.1.CDS1"/>
    <property type="gene ID" value="TraesPARA_EIv1.0_2681780"/>
</dbReference>
<dbReference type="Gramene" id="TraesPARA_EIv1.0_2682120.1">
    <property type="protein sequence ID" value="TraesPARA_EIv1.0_2682120.1.CDS1"/>
    <property type="gene ID" value="TraesPARA_EIv1.0_2682120"/>
</dbReference>
<dbReference type="Gramene" id="TraesSYM3B03G01564080.1">
    <property type="protein sequence ID" value="TraesSYM3B03G01564080.1.CDS1"/>
    <property type="gene ID" value="TraesSYM3B03G01564080"/>
</dbReference>
<dbReference type="KEGG" id="taes:803208"/>
<dbReference type="eggNOG" id="ENOG502QV51">
    <property type="taxonomic scope" value="Eukaryota"/>
</dbReference>
<dbReference type="HOGENOM" id="CLU_105224_0_0_1"/>
<dbReference type="Proteomes" id="UP000019116">
    <property type="component" value="Chloroplast"/>
</dbReference>
<dbReference type="GO" id="GO:0009706">
    <property type="term" value="C:chloroplast inner membrane"/>
    <property type="evidence" value="ECO:0007669"/>
    <property type="project" value="UniProtKB-SubCell"/>
</dbReference>
<dbReference type="GO" id="GO:0015297">
    <property type="term" value="F:antiporter activity"/>
    <property type="evidence" value="ECO:0007669"/>
    <property type="project" value="UniProtKB-KW"/>
</dbReference>
<dbReference type="GO" id="GO:0015078">
    <property type="term" value="F:proton transmembrane transporter activity"/>
    <property type="evidence" value="ECO:0007669"/>
    <property type="project" value="UniProtKB-UniRule"/>
</dbReference>
<dbReference type="GO" id="GO:0006813">
    <property type="term" value="P:potassium ion transport"/>
    <property type="evidence" value="ECO:0007669"/>
    <property type="project" value="UniProtKB-UniRule"/>
</dbReference>
<dbReference type="HAMAP" id="MF_01308">
    <property type="entry name" value="CemA_PxcA"/>
    <property type="match status" value="1"/>
</dbReference>
<dbReference type="InterPro" id="IPR004282">
    <property type="entry name" value="CemA"/>
</dbReference>
<dbReference type="PANTHER" id="PTHR33650:SF2">
    <property type="entry name" value="CHLOROPLAST ENVELOPE MEMBRANE PROTEIN"/>
    <property type="match status" value="1"/>
</dbReference>
<dbReference type="PANTHER" id="PTHR33650">
    <property type="entry name" value="CHLOROPLAST ENVELOPE MEMBRANE PROTEIN-RELATED"/>
    <property type="match status" value="1"/>
</dbReference>
<dbReference type="Pfam" id="PF03040">
    <property type="entry name" value="CemA"/>
    <property type="match status" value="1"/>
</dbReference>
<accession>P69373</accession>
<accession>P25411</accession>
<protein>
    <recommendedName>
        <fullName evidence="1">Potassium/proton antiporter CemA</fullName>
    </recommendedName>
    <alternativeName>
        <fullName evidence="1">Chloroplast envelope membrane protein A</fullName>
        <shortName evidence="1">CemA</shortName>
    </alternativeName>
</protein>
<feature type="chain" id="PRO_0000216666" description="Potassium/proton antiporter CemA">
    <location>
        <begin position="1"/>
        <end position="230"/>
    </location>
</feature>
<feature type="transmembrane region" description="Helical" evidence="1">
    <location>
        <begin position="7"/>
        <end position="27"/>
    </location>
</feature>
<feature type="transmembrane region" description="Helical" evidence="1">
    <location>
        <begin position="107"/>
        <end position="127"/>
    </location>
</feature>
<feature type="transmembrane region" description="Helical" evidence="1">
    <location>
        <begin position="145"/>
        <end position="165"/>
    </location>
</feature>
<feature type="transmembrane region" description="Helical" evidence="1">
    <location>
        <begin position="181"/>
        <end position="201"/>
    </location>
</feature>